<name>DAPE_BARHE</name>
<keyword id="KW-0028">Amino-acid biosynthesis</keyword>
<keyword id="KW-0170">Cobalt</keyword>
<keyword id="KW-0220">Diaminopimelate biosynthesis</keyword>
<keyword id="KW-0378">Hydrolase</keyword>
<keyword id="KW-0457">Lysine biosynthesis</keyword>
<keyword id="KW-0479">Metal-binding</keyword>
<keyword id="KW-0862">Zinc</keyword>
<protein>
    <recommendedName>
        <fullName evidence="1">Succinyl-diaminopimelate desuccinylase</fullName>
        <shortName evidence="1">SDAP desuccinylase</shortName>
        <ecNumber evidence="1">3.5.1.18</ecNumber>
    </recommendedName>
    <alternativeName>
        <fullName evidence="1">N-succinyl-LL-2,6-diaminoheptanedioate amidohydrolase</fullName>
    </alternativeName>
</protein>
<organism>
    <name type="scientific">Bartonella henselae (strain ATCC 49882 / DSM 28221 / CCUG 30454 / Houston 1)</name>
    <name type="common">Rochalimaea henselae</name>
    <dbReference type="NCBI Taxonomy" id="283166"/>
    <lineage>
        <taxon>Bacteria</taxon>
        <taxon>Pseudomonadati</taxon>
        <taxon>Pseudomonadota</taxon>
        <taxon>Alphaproteobacteria</taxon>
        <taxon>Hyphomicrobiales</taxon>
        <taxon>Bartonellaceae</taxon>
        <taxon>Bartonella</taxon>
    </lineage>
</organism>
<accession>Q6G567</accession>
<comment type="function">
    <text evidence="1">Catalyzes the hydrolysis of N-succinyl-L,L-diaminopimelic acid (SDAP), forming succinate and LL-2,6-diaminopimelate (DAP), an intermediate involved in the bacterial biosynthesis of lysine and meso-diaminopimelic acid, an essential component of bacterial cell walls.</text>
</comment>
<comment type="catalytic activity">
    <reaction evidence="1">
        <text>N-succinyl-(2S,6S)-2,6-diaminopimelate + H2O = (2S,6S)-2,6-diaminopimelate + succinate</text>
        <dbReference type="Rhea" id="RHEA:22608"/>
        <dbReference type="ChEBI" id="CHEBI:15377"/>
        <dbReference type="ChEBI" id="CHEBI:30031"/>
        <dbReference type="ChEBI" id="CHEBI:57609"/>
        <dbReference type="ChEBI" id="CHEBI:58087"/>
        <dbReference type="EC" id="3.5.1.18"/>
    </reaction>
</comment>
<comment type="cofactor">
    <cofactor evidence="1">
        <name>Zn(2+)</name>
        <dbReference type="ChEBI" id="CHEBI:29105"/>
    </cofactor>
    <cofactor evidence="1">
        <name>Co(2+)</name>
        <dbReference type="ChEBI" id="CHEBI:48828"/>
    </cofactor>
    <text evidence="1">Binds 2 Zn(2+) or Co(2+) ions per subunit.</text>
</comment>
<comment type="pathway">
    <text evidence="1">Amino-acid biosynthesis; L-lysine biosynthesis via DAP pathway; LL-2,6-diaminopimelate from (S)-tetrahydrodipicolinate (succinylase route): step 3/3.</text>
</comment>
<comment type="subunit">
    <text evidence="1">Homodimer.</text>
</comment>
<comment type="similarity">
    <text evidence="1">Belongs to the peptidase M20A family. DapE subfamily.</text>
</comment>
<gene>
    <name evidence="1" type="primary">dapE</name>
    <name type="ordered locus">BH00520</name>
</gene>
<dbReference type="EC" id="3.5.1.18" evidence="1"/>
<dbReference type="EMBL" id="BX897699">
    <property type="protein sequence ID" value="CAF26868.1"/>
    <property type="molecule type" value="Genomic_DNA"/>
</dbReference>
<dbReference type="RefSeq" id="WP_011180015.1">
    <property type="nucleotide sequence ID" value="NZ_LRIJ02000001.1"/>
</dbReference>
<dbReference type="SMR" id="Q6G567"/>
<dbReference type="PaxDb" id="283166-BH00520"/>
<dbReference type="EnsemblBacteria" id="CAF26868">
    <property type="protein sequence ID" value="CAF26868"/>
    <property type="gene ID" value="BH00520"/>
</dbReference>
<dbReference type="GeneID" id="92986339"/>
<dbReference type="KEGG" id="bhe:BH00520"/>
<dbReference type="eggNOG" id="COG0624">
    <property type="taxonomic scope" value="Bacteria"/>
</dbReference>
<dbReference type="OrthoDB" id="9809784at2"/>
<dbReference type="UniPathway" id="UPA00034">
    <property type="reaction ID" value="UER00021"/>
</dbReference>
<dbReference type="Proteomes" id="UP000000421">
    <property type="component" value="Chromosome"/>
</dbReference>
<dbReference type="GO" id="GO:0008777">
    <property type="term" value="F:acetylornithine deacetylase activity"/>
    <property type="evidence" value="ECO:0007669"/>
    <property type="project" value="TreeGrafter"/>
</dbReference>
<dbReference type="GO" id="GO:0050897">
    <property type="term" value="F:cobalt ion binding"/>
    <property type="evidence" value="ECO:0007669"/>
    <property type="project" value="UniProtKB-UniRule"/>
</dbReference>
<dbReference type="GO" id="GO:0009014">
    <property type="term" value="F:succinyl-diaminopimelate desuccinylase activity"/>
    <property type="evidence" value="ECO:0007669"/>
    <property type="project" value="UniProtKB-UniRule"/>
</dbReference>
<dbReference type="GO" id="GO:0008270">
    <property type="term" value="F:zinc ion binding"/>
    <property type="evidence" value="ECO:0007669"/>
    <property type="project" value="UniProtKB-UniRule"/>
</dbReference>
<dbReference type="GO" id="GO:0019877">
    <property type="term" value="P:diaminopimelate biosynthetic process"/>
    <property type="evidence" value="ECO:0007669"/>
    <property type="project" value="UniProtKB-UniRule"/>
</dbReference>
<dbReference type="GO" id="GO:0006526">
    <property type="term" value="P:L-arginine biosynthetic process"/>
    <property type="evidence" value="ECO:0007669"/>
    <property type="project" value="TreeGrafter"/>
</dbReference>
<dbReference type="GO" id="GO:0009089">
    <property type="term" value="P:lysine biosynthetic process via diaminopimelate"/>
    <property type="evidence" value="ECO:0007669"/>
    <property type="project" value="UniProtKB-UniRule"/>
</dbReference>
<dbReference type="CDD" id="cd03891">
    <property type="entry name" value="M20_DapE_proteobac"/>
    <property type="match status" value="1"/>
</dbReference>
<dbReference type="Gene3D" id="3.30.70.360">
    <property type="match status" value="1"/>
</dbReference>
<dbReference type="Gene3D" id="3.40.630.10">
    <property type="entry name" value="Zn peptidases"/>
    <property type="match status" value="2"/>
</dbReference>
<dbReference type="HAMAP" id="MF_01690">
    <property type="entry name" value="DapE"/>
    <property type="match status" value="1"/>
</dbReference>
<dbReference type="InterPro" id="IPR010182">
    <property type="entry name" value="ArgE/DapE"/>
</dbReference>
<dbReference type="InterPro" id="IPR001261">
    <property type="entry name" value="ArgE/DapE_CS"/>
</dbReference>
<dbReference type="InterPro" id="IPR036264">
    <property type="entry name" value="Bact_exopeptidase_dim_dom"/>
</dbReference>
<dbReference type="InterPro" id="IPR005941">
    <property type="entry name" value="DapE_proteobac"/>
</dbReference>
<dbReference type="InterPro" id="IPR002933">
    <property type="entry name" value="Peptidase_M20"/>
</dbReference>
<dbReference type="InterPro" id="IPR011650">
    <property type="entry name" value="Peptidase_M20_dimer"/>
</dbReference>
<dbReference type="InterPro" id="IPR050072">
    <property type="entry name" value="Peptidase_M20A"/>
</dbReference>
<dbReference type="NCBIfam" id="TIGR01910">
    <property type="entry name" value="DapE-ArgE"/>
    <property type="match status" value="1"/>
</dbReference>
<dbReference type="NCBIfam" id="TIGR01246">
    <property type="entry name" value="dapE_proteo"/>
    <property type="match status" value="1"/>
</dbReference>
<dbReference type="NCBIfam" id="NF009557">
    <property type="entry name" value="PRK13009.1"/>
    <property type="match status" value="1"/>
</dbReference>
<dbReference type="PANTHER" id="PTHR43808">
    <property type="entry name" value="ACETYLORNITHINE DEACETYLASE"/>
    <property type="match status" value="1"/>
</dbReference>
<dbReference type="PANTHER" id="PTHR43808:SF31">
    <property type="entry name" value="N-ACETYL-L-CITRULLINE DEACETYLASE"/>
    <property type="match status" value="1"/>
</dbReference>
<dbReference type="Pfam" id="PF07687">
    <property type="entry name" value="M20_dimer"/>
    <property type="match status" value="1"/>
</dbReference>
<dbReference type="Pfam" id="PF01546">
    <property type="entry name" value="Peptidase_M20"/>
    <property type="match status" value="1"/>
</dbReference>
<dbReference type="SUPFAM" id="SSF55031">
    <property type="entry name" value="Bacterial exopeptidase dimerisation domain"/>
    <property type="match status" value="1"/>
</dbReference>
<dbReference type="SUPFAM" id="SSF53187">
    <property type="entry name" value="Zn-dependent exopeptidases"/>
    <property type="match status" value="1"/>
</dbReference>
<dbReference type="PROSITE" id="PS00758">
    <property type="entry name" value="ARGE_DAPE_CPG2_1"/>
    <property type="match status" value="1"/>
</dbReference>
<dbReference type="PROSITE" id="PS00759">
    <property type="entry name" value="ARGE_DAPE_CPG2_2"/>
    <property type="match status" value="1"/>
</dbReference>
<feature type="chain" id="PRO_0000375470" description="Succinyl-diaminopimelate desuccinylase">
    <location>
        <begin position="1"/>
        <end position="390"/>
    </location>
</feature>
<feature type="active site" evidence="1">
    <location>
        <position position="76"/>
    </location>
</feature>
<feature type="active site" description="Proton acceptor" evidence="1">
    <location>
        <position position="140"/>
    </location>
</feature>
<feature type="binding site" evidence="1">
    <location>
        <position position="74"/>
    </location>
    <ligand>
        <name>Zn(2+)</name>
        <dbReference type="ChEBI" id="CHEBI:29105"/>
        <label>1</label>
    </ligand>
</feature>
<feature type="binding site" evidence="1">
    <location>
        <position position="107"/>
    </location>
    <ligand>
        <name>Zn(2+)</name>
        <dbReference type="ChEBI" id="CHEBI:29105"/>
        <label>1</label>
    </ligand>
</feature>
<feature type="binding site" evidence="1">
    <location>
        <position position="107"/>
    </location>
    <ligand>
        <name>Zn(2+)</name>
        <dbReference type="ChEBI" id="CHEBI:29105"/>
        <label>2</label>
    </ligand>
</feature>
<feature type="binding site" evidence="1">
    <location>
        <position position="141"/>
    </location>
    <ligand>
        <name>Zn(2+)</name>
        <dbReference type="ChEBI" id="CHEBI:29105"/>
        <label>2</label>
    </ligand>
</feature>
<feature type="binding site" evidence="1">
    <location>
        <position position="169"/>
    </location>
    <ligand>
        <name>Zn(2+)</name>
        <dbReference type="ChEBI" id="CHEBI:29105"/>
        <label>1</label>
    </ligand>
</feature>
<feature type="binding site" evidence="1">
    <location>
        <position position="363"/>
    </location>
    <ligand>
        <name>Zn(2+)</name>
        <dbReference type="ChEBI" id="CHEBI:29105"/>
        <label>2</label>
    </ligand>
</feature>
<proteinExistence type="inferred from homology"/>
<reference key="1">
    <citation type="journal article" date="2004" name="Proc. Natl. Acad. Sci. U.S.A.">
        <title>The louse-borne human pathogen Bartonella quintana is a genomic derivative of the zoonotic agent Bartonella henselae.</title>
        <authorList>
            <person name="Alsmark U.C.M."/>
            <person name="Frank A.C."/>
            <person name="Karlberg E.O."/>
            <person name="Legault B.-A."/>
            <person name="Ardell D.H."/>
            <person name="Canbaeck B."/>
            <person name="Eriksson A.-S."/>
            <person name="Naeslund A.K."/>
            <person name="Handley S.A."/>
            <person name="Huvet M."/>
            <person name="La Scola B."/>
            <person name="Holmberg M."/>
            <person name="Andersson S.G.E."/>
        </authorList>
    </citation>
    <scope>NUCLEOTIDE SEQUENCE [LARGE SCALE GENOMIC DNA]</scope>
    <source>
        <strain>ATCC 49882 / DSM 28221 / CCUG 30454 / Houston 1</strain>
    </source>
</reference>
<sequence>MPVLTDPLQILQALIRCPSVTPHEAGALSTLEQFLTKMGFHVERPIFADKNTEDVENLYAKMGKEGPHLMFAGHTDVVPPGDLENWKYPPFEGVIDQGKLYGRGAVDMKGGIACFVAAFARVLEKRTIKGRVSLLITGDEEGPALNGTVKLLKWAEQKGEKWTAALVGEPTSVKTVGDVIKIGRRGSISGIMTVKGRQGHVAFPERAANPLPLASKLIQSLIQTTLDEGTENFQPSNLELTAIDTGNPAMNVIPAQATVHFNIRYNDLWTKEMLMAEIENRLALVQSKNNNGQYPYYQLEWIPSLGDVFLTKNDKLINTLSNAIKSVTGNIPECSTSGGTSDARFIKDYCPVIEFGLPGQTMHMVDECVTVDAMETLTSIYECFIVDFFA</sequence>
<evidence type="ECO:0000255" key="1">
    <source>
        <dbReference type="HAMAP-Rule" id="MF_01690"/>
    </source>
</evidence>